<accession>Q5A7S5</accession>
<accession>A0A1D8PJ07</accession>
<dbReference type="EMBL" id="CP017625">
    <property type="protein sequence ID" value="AOW28116.1"/>
    <property type="molecule type" value="Genomic_DNA"/>
</dbReference>
<dbReference type="RefSeq" id="XP_717766.1">
    <property type="nucleotide sequence ID" value="XM_712673.1"/>
</dbReference>
<dbReference type="SMR" id="Q5A7S5"/>
<dbReference type="FunCoup" id="Q5A7S5">
    <property type="interactions" value="1374"/>
</dbReference>
<dbReference type="STRING" id="237561.Q5A7S5"/>
<dbReference type="EnsemblFungi" id="C3_00660W_A-T">
    <property type="protein sequence ID" value="C3_00660W_A-T-p1"/>
    <property type="gene ID" value="C3_00660W_A"/>
</dbReference>
<dbReference type="GeneID" id="3640538"/>
<dbReference type="KEGG" id="cal:CAALFM_C300660WA"/>
<dbReference type="CGD" id="CAL0000182953">
    <property type="gene designation" value="orf19.12846"/>
</dbReference>
<dbReference type="VEuPathDB" id="FungiDB:C3_00660W_A"/>
<dbReference type="eggNOG" id="KOG1898">
    <property type="taxonomic scope" value="Eukaryota"/>
</dbReference>
<dbReference type="HOGENOM" id="CLU_003246_0_1_1"/>
<dbReference type="InParanoid" id="Q5A7S5"/>
<dbReference type="OMA" id="PRATGHW"/>
<dbReference type="OrthoDB" id="436637at2759"/>
<dbReference type="PRO" id="PR:Q5A7S5"/>
<dbReference type="Proteomes" id="UP000000559">
    <property type="component" value="Chromosome 3"/>
</dbReference>
<dbReference type="GO" id="GO:0005634">
    <property type="term" value="C:nucleus"/>
    <property type="evidence" value="ECO:0000318"/>
    <property type="project" value="GO_Central"/>
</dbReference>
<dbReference type="GO" id="GO:0005681">
    <property type="term" value="C:spliceosomal complex"/>
    <property type="evidence" value="ECO:0007669"/>
    <property type="project" value="UniProtKB-KW"/>
</dbReference>
<dbReference type="GO" id="GO:0005686">
    <property type="term" value="C:U2 snRNP"/>
    <property type="evidence" value="ECO:0000318"/>
    <property type="project" value="GO_Central"/>
</dbReference>
<dbReference type="GO" id="GO:0030620">
    <property type="term" value="F:U2 snRNA binding"/>
    <property type="evidence" value="ECO:0000318"/>
    <property type="project" value="GO_Central"/>
</dbReference>
<dbReference type="GO" id="GO:0000398">
    <property type="term" value="P:mRNA splicing, via spliceosome"/>
    <property type="evidence" value="ECO:0000318"/>
    <property type="project" value="GO_Central"/>
</dbReference>
<dbReference type="FunFam" id="2.130.10.10:FF:000628">
    <property type="entry name" value="Pre-mRNA-splicing factor RSE1"/>
    <property type="match status" value="1"/>
</dbReference>
<dbReference type="FunFam" id="2.130.10.10:FF:002437">
    <property type="entry name" value="Pre-mRNA-splicing factor RSE1"/>
    <property type="match status" value="1"/>
</dbReference>
<dbReference type="Gene3D" id="2.130.10.10">
    <property type="entry name" value="YVTN repeat-like/Quinoprotein amine dehydrogenase"/>
    <property type="match status" value="3"/>
</dbReference>
<dbReference type="InterPro" id="IPR018846">
    <property type="entry name" value="Beta-prop_RSE1/DDB1/CPSF1_1st"/>
</dbReference>
<dbReference type="InterPro" id="IPR004871">
    <property type="entry name" value="Cleavage/polyA-sp_fac_asu_C"/>
</dbReference>
<dbReference type="InterPro" id="IPR050358">
    <property type="entry name" value="RSE1/DDB1/CFT1/CPSF1"/>
</dbReference>
<dbReference type="InterPro" id="IPR015943">
    <property type="entry name" value="WD40/YVTN_repeat-like_dom_sf"/>
</dbReference>
<dbReference type="PANTHER" id="PTHR10644">
    <property type="entry name" value="DNA REPAIR/RNA PROCESSING CPSF FAMILY"/>
    <property type="match status" value="1"/>
</dbReference>
<dbReference type="Pfam" id="PF10433">
    <property type="entry name" value="Beta-prop_RSE1_1st"/>
    <property type="match status" value="1"/>
</dbReference>
<dbReference type="Pfam" id="PF23726">
    <property type="entry name" value="Beta-prop_RSE1_2nd"/>
    <property type="match status" value="1"/>
</dbReference>
<dbReference type="Pfam" id="PF03178">
    <property type="entry name" value="CPSF_A"/>
    <property type="match status" value="1"/>
</dbReference>
<keyword id="KW-0507">mRNA processing</keyword>
<keyword id="KW-0508">mRNA splicing</keyword>
<keyword id="KW-0539">Nucleus</keyword>
<keyword id="KW-1185">Reference proteome</keyword>
<keyword id="KW-0747">Spliceosome</keyword>
<organism>
    <name type="scientific">Candida albicans (strain SC5314 / ATCC MYA-2876)</name>
    <name type="common">Yeast</name>
    <dbReference type="NCBI Taxonomy" id="237561"/>
    <lineage>
        <taxon>Eukaryota</taxon>
        <taxon>Fungi</taxon>
        <taxon>Dikarya</taxon>
        <taxon>Ascomycota</taxon>
        <taxon>Saccharomycotina</taxon>
        <taxon>Pichiomycetes</taxon>
        <taxon>Debaryomycetaceae</taxon>
        <taxon>Candida/Lodderomyces clade</taxon>
        <taxon>Candida</taxon>
    </lineage>
</organism>
<proteinExistence type="inferred from homology"/>
<gene>
    <name type="primary">RSE1</name>
    <name type="synonym">SAP130</name>
    <name type="ordered locus">CAALFM_C300660WA</name>
    <name type="ORF">CaO19.12846</name>
    <name type="ORF">CaO19.5391</name>
</gene>
<feature type="chain" id="PRO_0000218627" description="Pre-mRNA-splicing factor RSE1">
    <location>
        <begin position="1"/>
        <end position="1219"/>
    </location>
</feature>
<name>RSE1_CANAL</name>
<evidence type="ECO:0000250" key="1"/>
<evidence type="ECO:0000305" key="2"/>
<comment type="function">
    <text evidence="1">Involved in pre-mRNA splicing and cell cycle control.</text>
</comment>
<comment type="subunit">
    <text evidence="1">Associated with the spliceosome.</text>
</comment>
<comment type="subcellular location">
    <subcellularLocation>
        <location evidence="1">Nucleus</location>
    </subcellularLocation>
</comment>
<comment type="similarity">
    <text evidence="2">Belongs to the RSE1 family.</text>
</comment>
<sequence>MMMRDGNISGPKKKKFTTKCRPFSFYKNRHIIMLINDESVYLYNLTLKPPSYYISSIVGQFYKQDNSTKNAQQLVLVSSTTLQLFEINEEAGKLELQSSQNLLGIINSIEKICLSEVDGVVITSDSGNLSILQYDNKTKKFISKIQEPMTKNGWGRNYVGENLAIDPENRCILVAAMEKNKLFYKIESNSSGSKELSSPLEAHSKQVLCLKIVALNTDHNNPLFGALELTPEKKCIINYYELDQGLNHVVKKKPNSSNSDPLPNDVNYLIPLPGHIGGMVVCGTNWCFYDKLDGPRIYLPLPRRNGQTQDSIIVNHVTHVLKKKKFFILLQNALGDLFKLTVDYDFDKEIIKNISITYFDTIPPALSLNIFKNGFLFANVLNNDKLLYQFEKLGDDLTEGELVINSSDYESLNSVRESVTSFKLKGLDNLALIDVLETLSPITDSKIIDSKLVTLSSHSYVKSITHGVPTTTLVESPLPITPTDIFTTKLSLESANDEYLVISSSLSSKTLVLSIGEVVEDVEDSEFVLDQPTIAVQQVGIASVVQIYSNGIKHVRTVNGNKKTTDWFPPAGITITHATTNNQQVLIALSNLSVVYFEIDATDDQLIEYQDRLEIATTITAMAIQENISEKSPFAIIGCSDETIQVVSLQEHNCLEIKSLQALSANSSSLKMLKSSGKETHVHIGMENGVYARIKIDTINGNLSNSRVKYIGSKPVSLSVIKFSNEIEGILAISSAPWISYLYRDSFKITPLLEIDITNGSSFISEDIGGEGIVGIKDNNLIIFSVGKEDSVFDPSQDLTIATTKLRYTPRKMITNGNRLFISESEYNVQGPFKCNINGDVKENVDEDYYEAFGYEWKQNSWASCIQVVDSKSNQVIQSLQLDGNESIVSMSAVSFNKTSTPSVPASHLVVGVCTNQTILPNSYDKSYLYTFKIGKKHLQLVHKTELDHIPQVLENFQDKLLVASGNHIRLYDIGQKQLLKKSTTIIDFSTNINKIIPQTNRIIICDSHKSSIVFAKFDESQNQFVPFADDVMKRQITSIMNLDIDTLIGGDKFGNIFVTRIDEDISKQADDDWTILKTQDGILNSCPYKLQNLIEFHIGDIITSFNLGCLNLAGTESVIYTGLQGTIGLLIPLVSKSEVELLFNLQLYMQQSQNNLVGKDHLKLRSYYNPIKNVIDGDLLERFLEFDISLKIEISRKLNKSVNDIEKKLIDLRNRSAF</sequence>
<protein>
    <recommendedName>
        <fullName>Pre-mRNA-splicing factor RSE1</fullName>
    </recommendedName>
</protein>
<reference key="1">
    <citation type="journal article" date="2004" name="Proc. Natl. Acad. Sci. U.S.A.">
        <title>The diploid genome sequence of Candida albicans.</title>
        <authorList>
            <person name="Jones T."/>
            <person name="Federspiel N.A."/>
            <person name="Chibana H."/>
            <person name="Dungan J."/>
            <person name="Kalman S."/>
            <person name="Magee B.B."/>
            <person name="Newport G."/>
            <person name="Thorstenson Y.R."/>
            <person name="Agabian N."/>
            <person name="Magee P.T."/>
            <person name="Davis R.W."/>
            <person name="Scherer S."/>
        </authorList>
    </citation>
    <scope>NUCLEOTIDE SEQUENCE [LARGE SCALE GENOMIC DNA]</scope>
    <source>
        <strain>SC5314 / ATCC MYA-2876</strain>
    </source>
</reference>
<reference key="2">
    <citation type="journal article" date="2007" name="Genome Biol.">
        <title>Assembly of the Candida albicans genome into sixteen supercontigs aligned on the eight chromosomes.</title>
        <authorList>
            <person name="van het Hoog M."/>
            <person name="Rast T.J."/>
            <person name="Martchenko M."/>
            <person name="Grindle S."/>
            <person name="Dignard D."/>
            <person name="Hogues H."/>
            <person name="Cuomo C."/>
            <person name="Berriman M."/>
            <person name="Scherer S."/>
            <person name="Magee B.B."/>
            <person name="Whiteway M."/>
            <person name="Chibana H."/>
            <person name="Nantel A."/>
            <person name="Magee P.T."/>
        </authorList>
    </citation>
    <scope>GENOME REANNOTATION</scope>
    <source>
        <strain>SC5314 / ATCC MYA-2876</strain>
    </source>
</reference>
<reference key="3">
    <citation type="journal article" date="2013" name="Genome Biol.">
        <title>Assembly of a phased diploid Candida albicans genome facilitates allele-specific measurements and provides a simple model for repeat and indel structure.</title>
        <authorList>
            <person name="Muzzey D."/>
            <person name="Schwartz K."/>
            <person name="Weissman J.S."/>
            <person name="Sherlock G."/>
        </authorList>
    </citation>
    <scope>NUCLEOTIDE SEQUENCE [LARGE SCALE GENOMIC DNA]</scope>
    <scope>GENOME REANNOTATION</scope>
    <source>
        <strain>SC5314 / ATCC MYA-2876</strain>
    </source>
</reference>